<feature type="chain" id="PRO_0000171566" description="Ribulose-phosphate 3-epimerase">
    <location>
        <begin position="1"/>
        <end position="229"/>
    </location>
</feature>
<feature type="active site" description="Proton acceptor" evidence="1">
    <location>
        <position position="39"/>
    </location>
</feature>
<feature type="active site" description="Proton donor" evidence="1">
    <location>
        <position position="181"/>
    </location>
</feature>
<feature type="binding site" evidence="1">
    <location>
        <position position="12"/>
    </location>
    <ligand>
        <name>substrate</name>
    </ligand>
</feature>
<feature type="binding site" evidence="1">
    <location>
        <position position="37"/>
    </location>
    <ligand>
        <name>a divalent metal cation</name>
        <dbReference type="ChEBI" id="CHEBI:60240"/>
    </ligand>
</feature>
<feature type="binding site" evidence="1">
    <location>
        <position position="39"/>
    </location>
    <ligand>
        <name>a divalent metal cation</name>
        <dbReference type="ChEBI" id="CHEBI:60240"/>
    </ligand>
</feature>
<feature type="binding site" evidence="1">
    <location>
        <position position="70"/>
    </location>
    <ligand>
        <name>a divalent metal cation</name>
        <dbReference type="ChEBI" id="CHEBI:60240"/>
    </ligand>
</feature>
<feature type="binding site" evidence="1">
    <location>
        <position position="70"/>
    </location>
    <ligand>
        <name>substrate</name>
    </ligand>
</feature>
<feature type="binding site" evidence="1">
    <location>
        <begin position="146"/>
        <end position="149"/>
    </location>
    <ligand>
        <name>substrate</name>
    </ligand>
</feature>
<feature type="binding site" evidence="1">
    <location>
        <begin position="181"/>
        <end position="183"/>
    </location>
    <ligand>
        <name>substrate</name>
    </ligand>
</feature>
<feature type="binding site" evidence="1">
    <location>
        <position position="181"/>
    </location>
    <ligand>
        <name>a divalent metal cation</name>
        <dbReference type="ChEBI" id="CHEBI:60240"/>
    </ligand>
</feature>
<feature type="binding site" evidence="1">
    <location>
        <begin position="203"/>
        <end position="204"/>
    </location>
    <ligand>
        <name>substrate</name>
    </ligand>
</feature>
<feature type="sequence conflict" description="In Ref. 3; BAA98395." evidence="2" ref="3">
    <original>P</original>
    <variation>Q</variation>
    <location>
        <position position="145"/>
    </location>
</feature>
<feature type="sequence conflict" description="In Ref. 3; BAA98395." evidence="2" ref="3">
    <original>G</original>
    <variation>V</variation>
    <location>
        <position position="149"/>
    </location>
</feature>
<feature type="sequence conflict" description="In Ref. 3; BAA98395." evidence="2" ref="3">
    <original>N</original>
    <variation>H</variation>
    <location>
        <position position="155"/>
    </location>
</feature>
<keyword id="KW-0119">Carbohydrate metabolism</keyword>
<keyword id="KW-0413">Isomerase</keyword>
<keyword id="KW-0479">Metal-binding</keyword>
<reference key="1">
    <citation type="journal article" date="1999" name="Nat. Genet.">
        <title>Comparative genomes of Chlamydia pneumoniae and C. trachomatis.</title>
        <authorList>
            <person name="Kalman S."/>
            <person name="Mitchell W.P."/>
            <person name="Marathe R."/>
            <person name="Lammel C.J."/>
            <person name="Fan J."/>
            <person name="Hyman R.W."/>
            <person name="Olinger L."/>
            <person name="Grimwood J."/>
            <person name="Davis R.W."/>
            <person name="Stephens R.S."/>
        </authorList>
    </citation>
    <scope>NUCLEOTIDE SEQUENCE [LARGE SCALE GENOMIC DNA]</scope>
    <source>
        <strain>CWL029</strain>
    </source>
</reference>
<reference key="2">
    <citation type="journal article" date="2000" name="Nucleic Acids Res.">
        <title>Genome sequences of Chlamydia trachomatis MoPn and Chlamydia pneumoniae AR39.</title>
        <authorList>
            <person name="Read T.D."/>
            <person name="Brunham R.C."/>
            <person name="Shen C."/>
            <person name="Gill S.R."/>
            <person name="Heidelberg J.F."/>
            <person name="White O."/>
            <person name="Hickey E.K."/>
            <person name="Peterson J.D."/>
            <person name="Utterback T.R."/>
            <person name="Berry K.J."/>
            <person name="Bass S."/>
            <person name="Linher K.D."/>
            <person name="Weidman J.F."/>
            <person name="Khouri H.M."/>
            <person name="Craven B."/>
            <person name="Bowman C."/>
            <person name="Dodson R.J."/>
            <person name="Gwinn M.L."/>
            <person name="Nelson W.C."/>
            <person name="DeBoy R.T."/>
            <person name="Kolonay J.F."/>
            <person name="McClarty G."/>
            <person name="Salzberg S.L."/>
            <person name="Eisen J.A."/>
            <person name="Fraser C.M."/>
        </authorList>
    </citation>
    <scope>NUCLEOTIDE SEQUENCE [LARGE SCALE GENOMIC DNA]</scope>
    <source>
        <strain>AR39</strain>
    </source>
</reference>
<reference key="3">
    <citation type="journal article" date="2000" name="Nucleic Acids Res.">
        <title>Comparison of whole genome sequences of Chlamydia pneumoniae J138 from Japan and CWL029 from USA.</title>
        <authorList>
            <person name="Shirai M."/>
            <person name="Hirakawa H."/>
            <person name="Kimoto M."/>
            <person name="Tabuchi M."/>
            <person name="Kishi F."/>
            <person name="Ouchi K."/>
            <person name="Shiba T."/>
            <person name="Ishii K."/>
            <person name="Hattori M."/>
            <person name="Kuhara S."/>
            <person name="Nakazawa T."/>
        </authorList>
    </citation>
    <scope>NUCLEOTIDE SEQUENCE [LARGE SCALE GENOMIC DNA]</scope>
    <source>
        <strain>J138</strain>
    </source>
</reference>
<reference key="4">
    <citation type="submission" date="2002-05" db="EMBL/GenBank/DDBJ databases">
        <title>The genome sequence of Chlamydia pneumoniae TW183 and comparison with other Chlamydia strains based on whole genome sequence analysis.</title>
        <authorList>
            <person name="Geng M.M."/>
            <person name="Schuhmacher A."/>
            <person name="Muehldorfer I."/>
            <person name="Bensch K.W."/>
            <person name="Schaefer K.P."/>
            <person name="Schneider S."/>
            <person name="Pohl T."/>
            <person name="Essig A."/>
            <person name="Marre R."/>
            <person name="Melchers K."/>
        </authorList>
    </citation>
    <scope>NUCLEOTIDE SEQUENCE [LARGE SCALE GENOMIC DNA]</scope>
    <source>
        <strain>TW-183</strain>
    </source>
</reference>
<name>RPE_CHLPN</name>
<evidence type="ECO:0000255" key="1">
    <source>
        <dbReference type="HAMAP-Rule" id="MF_02227"/>
    </source>
</evidence>
<evidence type="ECO:0000305" key="2"/>
<sequence>MKKQESVLVGPSIMGADLTCLGVEAKKLEQAGSDFIHIDIMDGHFVPNLTFGPGIIAAINRSTDLFLEVHAMIYNPFEFIESFVRSGADRIIVHFEASEDIKELLSYIKKCGVQAGLAFSPDTSIEFLPSFLPFCDVVVLMSVYPGFTGQSFLPNTIEKIAFARHAIKTLGLKDSCLIEVDGGIDQQSAPLCRDAGADILVTASYLFEADSLAMEDKILLLRGENYGVK</sequence>
<dbReference type="EC" id="5.1.3.1" evidence="1"/>
<dbReference type="EMBL" id="AE001363">
    <property type="protein sequence ID" value="AAD18338.1"/>
    <property type="molecule type" value="Genomic_DNA"/>
</dbReference>
<dbReference type="EMBL" id="AE002161">
    <property type="protein sequence ID" value="AAF38401.1"/>
    <property type="molecule type" value="Genomic_DNA"/>
</dbReference>
<dbReference type="EMBL" id="BA000008">
    <property type="protein sequence ID" value="BAA98395.1"/>
    <property type="molecule type" value="Genomic_DNA"/>
</dbReference>
<dbReference type="EMBL" id="AE009440">
    <property type="protein sequence ID" value="AAP98121.1"/>
    <property type="molecule type" value="Genomic_DNA"/>
</dbReference>
<dbReference type="PIR" id="A86514">
    <property type="entry name" value="A86514"/>
</dbReference>
<dbReference type="PIR" id="H72110">
    <property type="entry name" value="H72110"/>
</dbReference>
<dbReference type="RefSeq" id="NP_224394.1">
    <property type="nucleotide sequence ID" value="NC_000922.1"/>
</dbReference>
<dbReference type="RefSeq" id="WP_010882836.1">
    <property type="nucleotide sequence ID" value="NZ_LN847257.1"/>
</dbReference>
<dbReference type="SMR" id="Q9Z8Z9"/>
<dbReference type="STRING" id="406984.CPK_ORF00691"/>
<dbReference type="GeneID" id="45050231"/>
<dbReference type="KEGG" id="cpa:CP_0583"/>
<dbReference type="KEGG" id="cpj:rpe"/>
<dbReference type="KEGG" id="cpn:CPn_0185"/>
<dbReference type="KEGG" id="cpt:CpB0188"/>
<dbReference type="PATRIC" id="fig|115713.3.peg.210"/>
<dbReference type="eggNOG" id="COG0036">
    <property type="taxonomic scope" value="Bacteria"/>
</dbReference>
<dbReference type="HOGENOM" id="CLU_054856_2_1_0"/>
<dbReference type="OrthoDB" id="1645589at2"/>
<dbReference type="Proteomes" id="UP000000583">
    <property type="component" value="Chromosome"/>
</dbReference>
<dbReference type="Proteomes" id="UP000000801">
    <property type="component" value="Chromosome"/>
</dbReference>
<dbReference type="GO" id="GO:0004750">
    <property type="term" value="F:D-ribulose-phosphate 3-epimerase activity"/>
    <property type="evidence" value="ECO:0007669"/>
    <property type="project" value="UniProtKB-UniRule"/>
</dbReference>
<dbReference type="GO" id="GO:0046872">
    <property type="term" value="F:metal ion binding"/>
    <property type="evidence" value="ECO:0007669"/>
    <property type="project" value="UniProtKB-UniRule"/>
</dbReference>
<dbReference type="GO" id="GO:0019323">
    <property type="term" value="P:pentose catabolic process"/>
    <property type="evidence" value="ECO:0007669"/>
    <property type="project" value="UniProtKB-UniRule"/>
</dbReference>
<dbReference type="GO" id="GO:0006098">
    <property type="term" value="P:pentose-phosphate shunt"/>
    <property type="evidence" value="ECO:0007669"/>
    <property type="project" value="InterPro"/>
</dbReference>
<dbReference type="CDD" id="cd00429">
    <property type="entry name" value="RPE"/>
    <property type="match status" value="1"/>
</dbReference>
<dbReference type="FunFam" id="3.20.20.70:FF:000004">
    <property type="entry name" value="Ribulose-phosphate 3-epimerase"/>
    <property type="match status" value="1"/>
</dbReference>
<dbReference type="Gene3D" id="3.20.20.70">
    <property type="entry name" value="Aldolase class I"/>
    <property type="match status" value="1"/>
</dbReference>
<dbReference type="HAMAP" id="MF_02227">
    <property type="entry name" value="RPE"/>
    <property type="match status" value="1"/>
</dbReference>
<dbReference type="InterPro" id="IPR013785">
    <property type="entry name" value="Aldolase_TIM"/>
</dbReference>
<dbReference type="InterPro" id="IPR026019">
    <property type="entry name" value="Ribul_P_3_epim"/>
</dbReference>
<dbReference type="InterPro" id="IPR000056">
    <property type="entry name" value="Ribul_P_3_epim-like"/>
</dbReference>
<dbReference type="InterPro" id="IPR011060">
    <property type="entry name" value="RibuloseP-bd_barrel"/>
</dbReference>
<dbReference type="NCBIfam" id="NF004076">
    <property type="entry name" value="PRK05581.1-4"/>
    <property type="match status" value="1"/>
</dbReference>
<dbReference type="NCBIfam" id="TIGR01163">
    <property type="entry name" value="rpe"/>
    <property type="match status" value="1"/>
</dbReference>
<dbReference type="PANTHER" id="PTHR11749">
    <property type="entry name" value="RIBULOSE-5-PHOSPHATE-3-EPIMERASE"/>
    <property type="match status" value="1"/>
</dbReference>
<dbReference type="Pfam" id="PF00834">
    <property type="entry name" value="Ribul_P_3_epim"/>
    <property type="match status" value="1"/>
</dbReference>
<dbReference type="PIRSF" id="PIRSF001461">
    <property type="entry name" value="RPE"/>
    <property type="match status" value="1"/>
</dbReference>
<dbReference type="SUPFAM" id="SSF51366">
    <property type="entry name" value="Ribulose-phoshate binding barrel"/>
    <property type="match status" value="1"/>
</dbReference>
<dbReference type="PROSITE" id="PS01085">
    <property type="entry name" value="RIBUL_P_3_EPIMER_1"/>
    <property type="match status" value="1"/>
</dbReference>
<dbReference type="PROSITE" id="PS01086">
    <property type="entry name" value="RIBUL_P_3_EPIMER_2"/>
    <property type="match status" value="1"/>
</dbReference>
<proteinExistence type="inferred from homology"/>
<accession>Q9Z8Z9</accession>
<accession>Q9JQL0</accession>
<accession>Q9JSI5</accession>
<comment type="function">
    <text evidence="1">Catalyzes the reversible epimerization of D-ribulose 5-phosphate to D-xylulose 5-phosphate.</text>
</comment>
<comment type="catalytic activity">
    <reaction evidence="1">
        <text>D-ribulose 5-phosphate = D-xylulose 5-phosphate</text>
        <dbReference type="Rhea" id="RHEA:13677"/>
        <dbReference type="ChEBI" id="CHEBI:57737"/>
        <dbReference type="ChEBI" id="CHEBI:58121"/>
        <dbReference type="EC" id="5.1.3.1"/>
    </reaction>
</comment>
<comment type="cofactor">
    <cofactor evidence="1">
        <name>a divalent metal cation</name>
        <dbReference type="ChEBI" id="CHEBI:60240"/>
    </cofactor>
    <text evidence="1">Binds 1 divalent metal cation per subunit.</text>
</comment>
<comment type="pathway">
    <text evidence="1">Carbohydrate degradation.</text>
</comment>
<comment type="similarity">
    <text evidence="1">Belongs to the ribulose-phosphate 3-epimerase family.</text>
</comment>
<gene>
    <name evidence="1" type="primary">rpe</name>
    <name type="ordered locus">CPn_0185</name>
    <name type="ordered locus">CP_0583</name>
    <name type="ordered locus">CpB0188</name>
</gene>
<organism>
    <name type="scientific">Chlamydia pneumoniae</name>
    <name type="common">Chlamydophila pneumoniae</name>
    <dbReference type="NCBI Taxonomy" id="83558"/>
    <lineage>
        <taxon>Bacteria</taxon>
        <taxon>Pseudomonadati</taxon>
        <taxon>Chlamydiota</taxon>
        <taxon>Chlamydiia</taxon>
        <taxon>Chlamydiales</taxon>
        <taxon>Chlamydiaceae</taxon>
        <taxon>Chlamydia/Chlamydophila group</taxon>
        <taxon>Chlamydia</taxon>
    </lineage>
</organism>
<protein>
    <recommendedName>
        <fullName evidence="1">Ribulose-phosphate 3-epimerase</fullName>
        <ecNumber evidence="1">5.1.3.1</ecNumber>
    </recommendedName>
</protein>